<proteinExistence type="inferred from homology"/>
<keyword id="KW-0227">DNA damage</keyword>
<keyword id="KW-0234">DNA repair</keyword>
<keyword id="KW-0235">DNA replication</keyword>
<keyword id="KW-0436">Ligase</keyword>
<keyword id="KW-0460">Magnesium</keyword>
<keyword id="KW-0464">Manganese</keyword>
<keyword id="KW-0479">Metal-binding</keyword>
<keyword id="KW-0520">NAD</keyword>
<keyword id="KW-0862">Zinc</keyword>
<evidence type="ECO:0000255" key="1">
    <source>
        <dbReference type="HAMAP-Rule" id="MF_01588"/>
    </source>
</evidence>
<reference key="1">
    <citation type="journal article" date="2007" name="DNA Res.">
        <title>Complete genomic structure of the bloom-forming toxic cyanobacterium Microcystis aeruginosa NIES-843.</title>
        <authorList>
            <person name="Kaneko T."/>
            <person name="Nakajima N."/>
            <person name="Okamoto S."/>
            <person name="Suzuki I."/>
            <person name="Tanabe Y."/>
            <person name="Tamaoki M."/>
            <person name="Nakamura Y."/>
            <person name="Kasai F."/>
            <person name="Watanabe A."/>
            <person name="Kawashima K."/>
            <person name="Kishida Y."/>
            <person name="Ono A."/>
            <person name="Shimizu Y."/>
            <person name="Takahashi C."/>
            <person name="Minami C."/>
            <person name="Fujishiro T."/>
            <person name="Kohara M."/>
            <person name="Katoh M."/>
            <person name="Nakazaki N."/>
            <person name="Nakayama S."/>
            <person name="Yamada M."/>
            <person name="Tabata S."/>
            <person name="Watanabe M.M."/>
        </authorList>
    </citation>
    <scope>NUCLEOTIDE SEQUENCE [LARGE SCALE GENOMIC DNA]</scope>
    <source>
        <strain>NIES-843 / IAM M-247</strain>
    </source>
</reference>
<accession>B0JTW2</accession>
<dbReference type="EC" id="6.5.1.2" evidence="1"/>
<dbReference type="EMBL" id="AP009552">
    <property type="protein sequence ID" value="BAG01150.1"/>
    <property type="molecule type" value="Genomic_DNA"/>
</dbReference>
<dbReference type="RefSeq" id="WP_012264760.1">
    <property type="nucleotide sequence ID" value="NC_010296.1"/>
</dbReference>
<dbReference type="SMR" id="B0JTW2"/>
<dbReference type="STRING" id="449447.MAE_13280"/>
<dbReference type="PaxDb" id="449447-MAE_13280"/>
<dbReference type="EnsemblBacteria" id="BAG01150">
    <property type="protein sequence ID" value="BAG01150"/>
    <property type="gene ID" value="MAE_13280"/>
</dbReference>
<dbReference type="KEGG" id="mar:MAE_13280"/>
<dbReference type="PATRIC" id="fig|449447.4.peg.1225"/>
<dbReference type="eggNOG" id="COG0272">
    <property type="taxonomic scope" value="Bacteria"/>
</dbReference>
<dbReference type="HOGENOM" id="CLU_007764_2_1_3"/>
<dbReference type="BioCyc" id="MAER449447:MAE_RS05880-MONOMER"/>
<dbReference type="Proteomes" id="UP000001510">
    <property type="component" value="Chromosome"/>
</dbReference>
<dbReference type="GO" id="GO:0003677">
    <property type="term" value="F:DNA binding"/>
    <property type="evidence" value="ECO:0007669"/>
    <property type="project" value="InterPro"/>
</dbReference>
<dbReference type="GO" id="GO:0003911">
    <property type="term" value="F:DNA ligase (NAD+) activity"/>
    <property type="evidence" value="ECO:0007669"/>
    <property type="project" value="UniProtKB-UniRule"/>
</dbReference>
<dbReference type="GO" id="GO:0046872">
    <property type="term" value="F:metal ion binding"/>
    <property type="evidence" value="ECO:0007669"/>
    <property type="project" value="UniProtKB-KW"/>
</dbReference>
<dbReference type="GO" id="GO:0006281">
    <property type="term" value="P:DNA repair"/>
    <property type="evidence" value="ECO:0007669"/>
    <property type="project" value="UniProtKB-KW"/>
</dbReference>
<dbReference type="GO" id="GO:0006260">
    <property type="term" value="P:DNA replication"/>
    <property type="evidence" value="ECO:0007669"/>
    <property type="project" value="UniProtKB-KW"/>
</dbReference>
<dbReference type="CDD" id="cd00114">
    <property type="entry name" value="LIGANc"/>
    <property type="match status" value="1"/>
</dbReference>
<dbReference type="FunFam" id="1.10.150.20:FF:000006">
    <property type="entry name" value="DNA ligase"/>
    <property type="match status" value="1"/>
</dbReference>
<dbReference type="FunFam" id="1.10.150.20:FF:000007">
    <property type="entry name" value="DNA ligase"/>
    <property type="match status" value="1"/>
</dbReference>
<dbReference type="FunFam" id="1.10.287.610:FF:000002">
    <property type="entry name" value="DNA ligase"/>
    <property type="match status" value="1"/>
</dbReference>
<dbReference type="FunFam" id="2.40.50.140:FF:000012">
    <property type="entry name" value="DNA ligase"/>
    <property type="match status" value="1"/>
</dbReference>
<dbReference type="FunFam" id="3.30.470.30:FF:000001">
    <property type="entry name" value="DNA ligase"/>
    <property type="match status" value="1"/>
</dbReference>
<dbReference type="Gene3D" id="6.20.10.30">
    <property type="match status" value="1"/>
</dbReference>
<dbReference type="Gene3D" id="1.10.150.20">
    <property type="entry name" value="5' to 3' exonuclease, C-terminal subdomain"/>
    <property type="match status" value="2"/>
</dbReference>
<dbReference type="Gene3D" id="3.40.50.10190">
    <property type="entry name" value="BRCT domain"/>
    <property type="match status" value="1"/>
</dbReference>
<dbReference type="Gene3D" id="3.30.470.30">
    <property type="entry name" value="DNA ligase/mRNA capping enzyme"/>
    <property type="match status" value="1"/>
</dbReference>
<dbReference type="Gene3D" id="1.10.287.610">
    <property type="entry name" value="Helix hairpin bin"/>
    <property type="match status" value="1"/>
</dbReference>
<dbReference type="Gene3D" id="2.40.50.140">
    <property type="entry name" value="Nucleic acid-binding proteins"/>
    <property type="match status" value="1"/>
</dbReference>
<dbReference type="HAMAP" id="MF_01588">
    <property type="entry name" value="DNA_ligase_A"/>
    <property type="match status" value="1"/>
</dbReference>
<dbReference type="InterPro" id="IPR001357">
    <property type="entry name" value="BRCT_dom"/>
</dbReference>
<dbReference type="InterPro" id="IPR036420">
    <property type="entry name" value="BRCT_dom_sf"/>
</dbReference>
<dbReference type="InterPro" id="IPR041663">
    <property type="entry name" value="DisA/LigA_HHH"/>
</dbReference>
<dbReference type="InterPro" id="IPR001679">
    <property type="entry name" value="DNA_ligase"/>
</dbReference>
<dbReference type="InterPro" id="IPR018239">
    <property type="entry name" value="DNA_ligase_AS"/>
</dbReference>
<dbReference type="InterPro" id="IPR013839">
    <property type="entry name" value="DNAligase_adenylation"/>
</dbReference>
<dbReference type="InterPro" id="IPR013840">
    <property type="entry name" value="DNAligase_N"/>
</dbReference>
<dbReference type="InterPro" id="IPR003583">
    <property type="entry name" value="Hlx-hairpin-Hlx_DNA-bd_motif"/>
</dbReference>
<dbReference type="InterPro" id="IPR012340">
    <property type="entry name" value="NA-bd_OB-fold"/>
</dbReference>
<dbReference type="InterPro" id="IPR004150">
    <property type="entry name" value="NAD_DNA_ligase_OB"/>
</dbReference>
<dbReference type="InterPro" id="IPR010994">
    <property type="entry name" value="RuvA_2-like"/>
</dbReference>
<dbReference type="InterPro" id="IPR004149">
    <property type="entry name" value="Znf_DNAligase_C4"/>
</dbReference>
<dbReference type="NCBIfam" id="TIGR00575">
    <property type="entry name" value="dnlj"/>
    <property type="match status" value="1"/>
</dbReference>
<dbReference type="NCBIfam" id="NF005932">
    <property type="entry name" value="PRK07956.1"/>
    <property type="match status" value="1"/>
</dbReference>
<dbReference type="PANTHER" id="PTHR23389">
    <property type="entry name" value="CHROMOSOME TRANSMISSION FIDELITY FACTOR 18"/>
    <property type="match status" value="1"/>
</dbReference>
<dbReference type="PANTHER" id="PTHR23389:SF6">
    <property type="entry name" value="REPLICATION FACTOR C SUBUNIT 1"/>
    <property type="match status" value="1"/>
</dbReference>
<dbReference type="Pfam" id="PF00533">
    <property type="entry name" value="BRCT"/>
    <property type="match status" value="1"/>
</dbReference>
<dbReference type="Pfam" id="PF01653">
    <property type="entry name" value="DNA_ligase_aden"/>
    <property type="match status" value="1"/>
</dbReference>
<dbReference type="Pfam" id="PF03120">
    <property type="entry name" value="DNA_ligase_OB"/>
    <property type="match status" value="1"/>
</dbReference>
<dbReference type="Pfam" id="PF03119">
    <property type="entry name" value="DNA_ligase_ZBD"/>
    <property type="match status" value="1"/>
</dbReference>
<dbReference type="Pfam" id="PF12826">
    <property type="entry name" value="HHH_2"/>
    <property type="match status" value="1"/>
</dbReference>
<dbReference type="Pfam" id="PF14520">
    <property type="entry name" value="HHH_5"/>
    <property type="match status" value="1"/>
</dbReference>
<dbReference type="Pfam" id="PF22745">
    <property type="entry name" value="Nlig-Ia"/>
    <property type="match status" value="1"/>
</dbReference>
<dbReference type="PIRSF" id="PIRSF001604">
    <property type="entry name" value="LigA"/>
    <property type="match status" value="1"/>
</dbReference>
<dbReference type="SMART" id="SM00292">
    <property type="entry name" value="BRCT"/>
    <property type="match status" value="1"/>
</dbReference>
<dbReference type="SMART" id="SM00278">
    <property type="entry name" value="HhH1"/>
    <property type="match status" value="3"/>
</dbReference>
<dbReference type="SMART" id="SM00532">
    <property type="entry name" value="LIGANc"/>
    <property type="match status" value="1"/>
</dbReference>
<dbReference type="SUPFAM" id="SSF52113">
    <property type="entry name" value="BRCT domain"/>
    <property type="match status" value="1"/>
</dbReference>
<dbReference type="SUPFAM" id="SSF56091">
    <property type="entry name" value="DNA ligase/mRNA capping enzyme, catalytic domain"/>
    <property type="match status" value="1"/>
</dbReference>
<dbReference type="SUPFAM" id="SSF50249">
    <property type="entry name" value="Nucleic acid-binding proteins"/>
    <property type="match status" value="1"/>
</dbReference>
<dbReference type="SUPFAM" id="SSF47781">
    <property type="entry name" value="RuvA domain 2-like"/>
    <property type="match status" value="1"/>
</dbReference>
<dbReference type="PROSITE" id="PS50172">
    <property type="entry name" value="BRCT"/>
    <property type="match status" value="1"/>
</dbReference>
<dbReference type="PROSITE" id="PS01055">
    <property type="entry name" value="DNA_LIGASE_N1"/>
    <property type="match status" value="1"/>
</dbReference>
<sequence>MTIPLEIQQRCQQLKTELQRASYAYYVLDDPFIPDSVYDQLYRELEDIEKRYPQLITPDSPTQRVGDKISSQFVSVRHNIPLYSLENAFNLEELNKWGNRWQRYVNETQDTEYVCELKIDGSALALTYENGFLVRGVTRGDGVTGEDITPNVRTIRSIPLRLNIDNPPAIVEVRGEAFLPLDTFDKINQEREEKRESLFANPRNAAAGTLRQLDPKIVDKRRLQFFAYTLHLDDNNITNQWQSLDRLESMGFLVNPHRQLCPSLQQVAQYYQDWQEKRHQLAYMTDGVVVKINDLQRQNRLGFTQKFPRWAIALKYPAEEVPTVVKDIIINVGRTGAVTPMAVMEPVQVAGTTVQRATLHNSDRVAELDIRVGDTVIIRKAGEIIPEVVRILPELRPNHTSPFQMPTNCPECQSPLVRPVGEAVTRCVNSSCPAILRGSVVHWASRDALDIRGLGEKVVILLIEQGLVTAISDLYSLEKTEIAKLDRMGEKSALNLITAMAQSKNQSWSRVLYGLGIRYVGSVNAKILAESFRTVEELANASVTDLASIYGIGEEIAQSVYDWFRIEANRDLVAKLQAAGLQFAAAAKTTTTKATLAGKTFVITGTLPTLKREEAKELIEKAGGKVTGSVSKKTDYLVLGEAAGSKLEKALELGITQLTEAQLLELIKA</sequence>
<feature type="chain" id="PRO_0000380422" description="DNA ligase">
    <location>
        <begin position="1"/>
        <end position="669"/>
    </location>
</feature>
<feature type="domain" description="BRCT" evidence="1">
    <location>
        <begin position="591"/>
        <end position="669"/>
    </location>
</feature>
<feature type="active site" description="N6-AMP-lysine intermediate" evidence="1">
    <location>
        <position position="118"/>
    </location>
</feature>
<feature type="binding site" evidence="1">
    <location>
        <begin position="35"/>
        <end position="39"/>
    </location>
    <ligand>
        <name>NAD(+)</name>
        <dbReference type="ChEBI" id="CHEBI:57540"/>
    </ligand>
</feature>
<feature type="binding site" evidence="1">
    <location>
        <begin position="84"/>
        <end position="85"/>
    </location>
    <ligand>
        <name>NAD(+)</name>
        <dbReference type="ChEBI" id="CHEBI:57540"/>
    </ligand>
</feature>
<feature type="binding site" evidence="1">
    <location>
        <position position="116"/>
    </location>
    <ligand>
        <name>NAD(+)</name>
        <dbReference type="ChEBI" id="CHEBI:57540"/>
    </ligand>
</feature>
<feature type="binding site" evidence="1">
    <location>
        <position position="139"/>
    </location>
    <ligand>
        <name>NAD(+)</name>
        <dbReference type="ChEBI" id="CHEBI:57540"/>
    </ligand>
</feature>
<feature type="binding site" evidence="1">
    <location>
        <position position="176"/>
    </location>
    <ligand>
        <name>NAD(+)</name>
        <dbReference type="ChEBI" id="CHEBI:57540"/>
    </ligand>
</feature>
<feature type="binding site" evidence="1">
    <location>
        <position position="291"/>
    </location>
    <ligand>
        <name>NAD(+)</name>
        <dbReference type="ChEBI" id="CHEBI:57540"/>
    </ligand>
</feature>
<feature type="binding site" evidence="1">
    <location>
        <position position="315"/>
    </location>
    <ligand>
        <name>NAD(+)</name>
        <dbReference type="ChEBI" id="CHEBI:57540"/>
    </ligand>
</feature>
<feature type="binding site" evidence="1">
    <location>
        <position position="409"/>
    </location>
    <ligand>
        <name>Zn(2+)</name>
        <dbReference type="ChEBI" id="CHEBI:29105"/>
    </ligand>
</feature>
<feature type="binding site" evidence="1">
    <location>
        <position position="412"/>
    </location>
    <ligand>
        <name>Zn(2+)</name>
        <dbReference type="ChEBI" id="CHEBI:29105"/>
    </ligand>
</feature>
<feature type="binding site" evidence="1">
    <location>
        <position position="427"/>
    </location>
    <ligand>
        <name>Zn(2+)</name>
        <dbReference type="ChEBI" id="CHEBI:29105"/>
    </ligand>
</feature>
<feature type="binding site" evidence="1">
    <location>
        <position position="432"/>
    </location>
    <ligand>
        <name>Zn(2+)</name>
        <dbReference type="ChEBI" id="CHEBI:29105"/>
    </ligand>
</feature>
<name>DNLJ_MICAN</name>
<comment type="function">
    <text evidence="1">DNA ligase that catalyzes the formation of phosphodiester linkages between 5'-phosphoryl and 3'-hydroxyl groups in double-stranded DNA using NAD as a coenzyme and as the energy source for the reaction. It is essential for DNA replication and repair of damaged DNA.</text>
</comment>
<comment type="catalytic activity">
    <reaction evidence="1">
        <text>NAD(+) + (deoxyribonucleotide)n-3'-hydroxyl + 5'-phospho-(deoxyribonucleotide)m = (deoxyribonucleotide)n+m + AMP + beta-nicotinamide D-nucleotide.</text>
        <dbReference type="EC" id="6.5.1.2"/>
    </reaction>
</comment>
<comment type="cofactor">
    <cofactor evidence="1">
        <name>Mg(2+)</name>
        <dbReference type="ChEBI" id="CHEBI:18420"/>
    </cofactor>
    <cofactor evidence="1">
        <name>Mn(2+)</name>
        <dbReference type="ChEBI" id="CHEBI:29035"/>
    </cofactor>
</comment>
<comment type="similarity">
    <text evidence="1">Belongs to the NAD-dependent DNA ligase family. LigA subfamily.</text>
</comment>
<gene>
    <name evidence="1" type="primary">ligA</name>
    <name type="ordered locus">MAE_13280</name>
</gene>
<organism>
    <name type="scientific">Microcystis aeruginosa (strain NIES-843 / IAM M-2473)</name>
    <dbReference type="NCBI Taxonomy" id="449447"/>
    <lineage>
        <taxon>Bacteria</taxon>
        <taxon>Bacillati</taxon>
        <taxon>Cyanobacteriota</taxon>
        <taxon>Cyanophyceae</taxon>
        <taxon>Oscillatoriophycideae</taxon>
        <taxon>Chroococcales</taxon>
        <taxon>Microcystaceae</taxon>
        <taxon>Microcystis</taxon>
    </lineage>
</organism>
<protein>
    <recommendedName>
        <fullName evidence="1">DNA ligase</fullName>
        <ecNumber evidence="1">6.5.1.2</ecNumber>
    </recommendedName>
    <alternativeName>
        <fullName evidence="1">Polydeoxyribonucleotide synthase [NAD(+)]</fullName>
    </alternativeName>
</protein>